<keyword id="KW-0119">Carbohydrate metabolism</keyword>
<keyword id="KW-0313">Glucose metabolism</keyword>
<keyword id="KW-0413">Isomerase</keyword>
<keyword id="KW-0460">Magnesium</keyword>
<keyword id="KW-0479">Metal-binding</keyword>
<keyword id="KW-0597">Phosphoprotein</keyword>
<keyword id="KW-1185">Reference proteome</keyword>
<proteinExistence type="evidence at protein level"/>
<reference key="1">
    <citation type="book" date="2006" name="Gram positive pathogens, 2nd edition">
        <title>The Staphylococcus aureus NCTC 8325 genome.</title>
        <editorList>
            <person name="Fischetti V."/>
            <person name="Novick R."/>
            <person name="Ferretti J."/>
            <person name="Portnoy D."/>
            <person name="Rood J."/>
        </editorList>
        <authorList>
            <person name="Gillaspy A.F."/>
            <person name="Worrell V."/>
            <person name="Orvis J."/>
            <person name="Roe B.A."/>
            <person name="Dyer D.W."/>
            <person name="Iandolo J.J."/>
        </authorList>
    </citation>
    <scope>NUCLEOTIDE SEQUENCE [LARGE SCALE GENOMIC DNA]</scope>
    <source>
        <strain>NCTC 8325 / PS 47</strain>
    </source>
</reference>
<reference key="2">
    <citation type="journal article" date="2007" name="J. Bacteriol.">
        <title>Genes required for glycolipid synthesis and lipoteichoic acid anchoring in Staphylococcus aureus.</title>
        <authorList>
            <person name="Gruendling A."/>
            <person name="Schneewind O."/>
        </authorList>
    </citation>
    <scope>FUNCTION IN GLYCOLIPID AND LTA BIOSYNTHESIS</scope>
    <scope>PATHWAY</scope>
</reference>
<protein>
    <recommendedName>
        <fullName>Phosphoglucomutase</fullName>
        <shortName>PGM</shortName>
        <ecNumber>5.4.2.2</ecNumber>
    </recommendedName>
    <alternativeName>
        <fullName>Alpha-phosphoglucomutase</fullName>
    </alternativeName>
    <alternativeName>
        <fullName>Glucose phosphomutase</fullName>
    </alternativeName>
</protein>
<gene>
    <name type="primary">pgcA</name>
    <name type="ordered locus">SAOUHSC_02793</name>
</gene>
<organism>
    <name type="scientific">Staphylococcus aureus (strain NCTC 8325 / PS 47)</name>
    <dbReference type="NCBI Taxonomy" id="93061"/>
    <lineage>
        <taxon>Bacteria</taxon>
        <taxon>Bacillati</taxon>
        <taxon>Bacillota</taxon>
        <taxon>Bacilli</taxon>
        <taxon>Bacillales</taxon>
        <taxon>Staphylococcaceae</taxon>
        <taxon>Staphylococcus</taxon>
    </lineage>
</organism>
<accession>Q2FVC1</accession>
<name>PGCA_STAA8</name>
<dbReference type="EC" id="5.4.2.2"/>
<dbReference type="EMBL" id="CP000253">
    <property type="protein sequence ID" value="ABD31796.1"/>
    <property type="status" value="ALT_INIT"/>
    <property type="molecule type" value="Genomic_DNA"/>
</dbReference>
<dbReference type="RefSeq" id="YP_501252.1">
    <property type="nucleotide sequence ID" value="NC_007795.1"/>
</dbReference>
<dbReference type="SMR" id="Q2FVC1"/>
<dbReference type="STRING" id="93061.SAOUHSC_02793"/>
<dbReference type="PaxDb" id="1280-SAXN108_2739"/>
<dbReference type="GeneID" id="3921447"/>
<dbReference type="KEGG" id="sao:SAOUHSC_02793"/>
<dbReference type="PATRIC" id="fig|93061.5.peg.2525"/>
<dbReference type="eggNOG" id="COG1109">
    <property type="taxonomic scope" value="Bacteria"/>
</dbReference>
<dbReference type="HOGENOM" id="CLU_016950_0_0_9"/>
<dbReference type="OrthoDB" id="9806956at2"/>
<dbReference type="UniPathway" id="UPA00894"/>
<dbReference type="Proteomes" id="UP000008816">
    <property type="component" value="Chromosome"/>
</dbReference>
<dbReference type="GO" id="GO:0000287">
    <property type="term" value="F:magnesium ion binding"/>
    <property type="evidence" value="ECO:0007669"/>
    <property type="project" value="InterPro"/>
</dbReference>
<dbReference type="GO" id="GO:0004614">
    <property type="term" value="F:phosphoglucomutase activity"/>
    <property type="evidence" value="ECO:0007669"/>
    <property type="project" value="UniProtKB-EC"/>
</dbReference>
<dbReference type="GO" id="GO:0008973">
    <property type="term" value="F:phosphopentomutase activity"/>
    <property type="evidence" value="ECO:0000318"/>
    <property type="project" value="GO_Central"/>
</dbReference>
<dbReference type="GO" id="GO:0009246">
    <property type="term" value="P:enterobacterial common antigen biosynthetic process"/>
    <property type="evidence" value="ECO:0007669"/>
    <property type="project" value="UniProtKB-UniPathway"/>
</dbReference>
<dbReference type="GO" id="GO:0006006">
    <property type="term" value="P:glucose metabolic process"/>
    <property type="evidence" value="ECO:0007669"/>
    <property type="project" value="UniProtKB-KW"/>
</dbReference>
<dbReference type="GO" id="GO:0006166">
    <property type="term" value="P:purine ribonucleoside salvage"/>
    <property type="evidence" value="ECO:0000318"/>
    <property type="project" value="GO_Central"/>
</dbReference>
<dbReference type="CDD" id="cd05799">
    <property type="entry name" value="PGM2"/>
    <property type="match status" value="1"/>
</dbReference>
<dbReference type="Gene3D" id="3.40.120.10">
    <property type="entry name" value="Alpha-D-Glucose-1,6-Bisphosphate, subunit A, domain 3"/>
    <property type="match status" value="3"/>
</dbReference>
<dbReference type="Gene3D" id="3.30.310.50">
    <property type="entry name" value="Alpha-D-phosphohexomutase, C-terminal domain"/>
    <property type="match status" value="1"/>
</dbReference>
<dbReference type="InterPro" id="IPR005844">
    <property type="entry name" value="A-D-PHexomutase_a/b/a-I"/>
</dbReference>
<dbReference type="InterPro" id="IPR016055">
    <property type="entry name" value="A-D-PHexomutase_a/b/a-I/II/III"/>
</dbReference>
<dbReference type="InterPro" id="IPR005845">
    <property type="entry name" value="A-D-PHexomutase_a/b/a-II"/>
</dbReference>
<dbReference type="InterPro" id="IPR005846">
    <property type="entry name" value="A-D-PHexomutase_a/b/a-III"/>
</dbReference>
<dbReference type="InterPro" id="IPR005843">
    <property type="entry name" value="A-D-PHexomutase_C"/>
</dbReference>
<dbReference type="InterPro" id="IPR036900">
    <property type="entry name" value="A-D-PHexomutase_C_sf"/>
</dbReference>
<dbReference type="InterPro" id="IPR016066">
    <property type="entry name" value="A-D-PHexomutase_CS"/>
</dbReference>
<dbReference type="InterPro" id="IPR005841">
    <property type="entry name" value="Alpha-D-phosphohexomutase_SF"/>
</dbReference>
<dbReference type="PANTHER" id="PTHR45745:SF1">
    <property type="entry name" value="PHOSPHOGLUCOMUTASE 2B-RELATED"/>
    <property type="match status" value="1"/>
</dbReference>
<dbReference type="PANTHER" id="PTHR45745">
    <property type="entry name" value="PHOSPHOMANNOMUTASE 45A"/>
    <property type="match status" value="1"/>
</dbReference>
<dbReference type="Pfam" id="PF02878">
    <property type="entry name" value="PGM_PMM_I"/>
    <property type="match status" value="1"/>
</dbReference>
<dbReference type="Pfam" id="PF02879">
    <property type="entry name" value="PGM_PMM_II"/>
    <property type="match status" value="1"/>
</dbReference>
<dbReference type="Pfam" id="PF02880">
    <property type="entry name" value="PGM_PMM_III"/>
    <property type="match status" value="1"/>
</dbReference>
<dbReference type="Pfam" id="PF00408">
    <property type="entry name" value="PGM_PMM_IV"/>
    <property type="match status" value="1"/>
</dbReference>
<dbReference type="PRINTS" id="PR00509">
    <property type="entry name" value="PGMPMM"/>
</dbReference>
<dbReference type="SUPFAM" id="SSF55957">
    <property type="entry name" value="Phosphoglucomutase, C-terminal domain"/>
    <property type="match status" value="1"/>
</dbReference>
<dbReference type="SUPFAM" id="SSF53738">
    <property type="entry name" value="Phosphoglucomutase, first 3 domains"/>
    <property type="match status" value="3"/>
</dbReference>
<dbReference type="PROSITE" id="PS00710">
    <property type="entry name" value="PGM_PMM"/>
    <property type="match status" value="1"/>
</dbReference>
<comment type="function">
    <text evidence="2 3">Catalyzes the interconversion between glucose-6-phosphate and alpha-glucose-1-phosphate (Probable). This is the first step in the biosynthesis of diglucosyl-diacylglycerol (Glc2-DAG), i.e. the predominant glycolipid found in the S.aureus membrane, which is also used as a membrane anchor for lipoteichoic acid (LTA).</text>
</comment>
<comment type="catalytic activity">
    <reaction>
        <text>alpha-D-glucose 1-phosphate = alpha-D-glucose 6-phosphate</text>
        <dbReference type="Rhea" id="RHEA:23536"/>
        <dbReference type="ChEBI" id="CHEBI:58225"/>
        <dbReference type="ChEBI" id="CHEBI:58601"/>
        <dbReference type="EC" id="5.4.2.2"/>
    </reaction>
</comment>
<comment type="cofactor">
    <cofactor evidence="1">
        <name>Mg(2+)</name>
        <dbReference type="ChEBI" id="CHEBI:18420"/>
    </cofactor>
    <text evidence="1">Binds 1 Mg(2+) ion per subunit.</text>
</comment>
<comment type="pathway">
    <text evidence="2">Glycolipid metabolism; diglucosyl-diacylglycerol biosynthesis.</text>
</comment>
<comment type="similarity">
    <text evidence="3">Belongs to the phosphohexose mutase family.</text>
</comment>
<comment type="sequence caution" evidence="3">
    <conflict type="erroneous initiation">
        <sequence resource="EMBL-CDS" id="ABD31796"/>
    </conflict>
</comment>
<evidence type="ECO:0000250" key="1"/>
<evidence type="ECO:0000269" key="2">
    <source>
    </source>
</evidence>
<evidence type="ECO:0000305" key="3"/>
<feature type="chain" id="PRO_0000308336" description="Phosphoglucomutase">
    <location>
        <begin position="1"/>
        <end position="552"/>
    </location>
</feature>
<feature type="active site" description="Phosphoserine intermediate" evidence="1">
    <location>
        <position position="143"/>
    </location>
</feature>
<feature type="binding site" description="via phosphate group" evidence="1">
    <location>
        <position position="143"/>
    </location>
    <ligand>
        <name>Mg(2+)</name>
        <dbReference type="ChEBI" id="CHEBI:18420"/>
    </ligand>
</feature>
<feature type="binding site" evidence="1">
    <location>
        <position position="295"/>
    </location>
    <ligand>
        <name>Mg(2+)</name>
        <dbReference type="ChEBI" id="CHEBI:18420"/>
    </ligand>
</feature>
<feature type="binding site" evidence="1">
    <location>
        <position position="297"/>
    </location>
    <ligand>
        <name>Mg(2+)</name>
        <dbReference type="ChEBI" id="CHEBI:18420"/>
    </ligand>
</feature>
<feature type="binding site" evidence="1">
    <location>
        <position position="299"/>
    </location>
    <ligand>
        <name>Mg(2+)</name>
        <dbReference type="ChEBI" id="CHEBI:18420"/>
    </ligand>
</feature>
<sequence length="552" mass="62377">MKGCLATMDKELWIERANDSLVKHFYEQQSDIEQREGFESKLTFGTAGIRGKFGLGEGRLNKFTIEKLALGLARYLNAQTNSPTIVIHYDIRHLSTEFAQIIANVLANHQITVYLPDTYKTTPELSFAVRNLNTTAGIMITASHNPKDYNGIKVYGSDGAQLSTDASELASRYIEEVGDPLQIDIPISKQNTSYIKPFPKSVTDDYMKHIQNMIGYIPKSDLQVVFTSLHGTSVPIVPELLQSLNFNQFNLVEAQCKPDPNFSSVQSANPEDHRAFDQAVELANKSHADLLISTDPDADRLGIAERDAHGHITYFNGNQIGALLLNYRIQQTSQLRHRLMIQSIVSSELTKSLARYNNVEYKEVLTGFKFIAQEIRQLDDHQNMIFAFEESYGFLSEPFVRDKDAVQIVPLIIKYASELKLYGKTLKDELEQIYQTVGRHEDTLFSHTLEGFEGKKKINAIMTKFRSNPPQEIQGLKVKAIEDYLTSEVYHLDKDTTSQINSPKSNVIRVLFDEGFIALRPSGTEPKIKLYVSLKCPNFDDVAQKINAMIFS</sequence>